<name>RSMJ_ECO81</name>
<feature type="chain" id="PRO_1000185124" description="Ribosomal RNA small subunit methyltransferase J">
    <location>
        <begin position="1"/>
        <end position="250"/>
    </location>
</feature>
<feature type="binding site" evidence="1">
    <location>
        <begin position="101"/>
        <end position="102"/>
    </location>
    <ligand>
        <name>S-adenosyl-L-methionine</name>
        <dbReference type="ChEBI" id="CHEBI:59789"/>
    </ligand>
</feature>
<feature type="binding site" evidence="1">
    <location>
        <begin position="117"/>
        <end position="118"/>
    </location>
    <ligand>
        <name>S-adenosyl-L-methionine</name>
        <dbReference type="ChEBI" id="CHEBI:59789"/>
    </ligand>
</feature>
<feature type="binding site" evidence="1">
    <location>
        <begin position="153"/>
        <end position="154"/>
    </location>
    <ligand>
        <name>S-adenosyl-L-methionine</name>
        <dbReference type="ChEBI" id="CHEBI:59789"/>
    </ligand>
</feature>
<feature type="binding site" evidence="1">
    <location>
        <position position="171"/>
    </location>
    <ligand>
        <name>S-adenosyl-L-methionine</name>
        <dbReference type="ChEBI" id="CHEBI:59789"/>
    </ligand>
</feature>
<dbReference type="EC" id="2.1.1.242" evidence="1"/>
<dbReference type="EMBL" id="CU928162">
    <property type="protein sequence ID" value="CAR10154.1"/>
    <property type="molecule type" value="Genomic_DNA"/>
</dbReference>
<dbReference type="RefSeq" id="WP_000686607.1">
    <property type="nucleotide sequence ID" value="NC_011745.1"/>
</dbReference>
<dbReference type="SMR" id="B7N1D6"/>
<dbReference type="KEGG" id="ecq:ECED1_4166"/>
<dbReference type="HOGENOM" id="CLU_076324_0_0_6"/>
<dbReference type="Proteomes" id="UP000000748">
    <property type="component" value="Chromosome"/>
</dbReference>
<dbReference type="GO" id="GO:0005737">
    <property type="term" value="C:cytoplasm"/>
    <property type="evidence" value="ECO:0007669"/>
    <property type="project" value="UniProtKB-SubCell"/>
</dbReference>
<dbReference type="GO" id="GO:0008990">
    <property type="term" value="F:rRNA (guanine-N2-)-methyltransferase activity"/>
    <property type="evidence" value="ECO:0007669"/>
    <property type="project" value="UniProtKB-UniRule"/>
</dbReference>
<dbReference type="CDD" id="cd02440">
    <property type="entry name" value="AdoMet_MTases"/>
    <property type="match status" value="1"/>
</dbReference>
<dbReference type="FunFam" id="3.40.1630.10:FF:000001">
    <property type="entry name" value="Ribosomal RNA small subunit methyltransferase J"/>
    <property type="match status" value="1"/>
</dbReference>
<dbReference type="FunFam" id="3.40.50.150:FF:000072">
    <property type="entry name" value="Ribosomal RNA small subunit methyltransferase J"/>
    <property type="match status" value="1"/>
</dbReference>
<dbReference type="Gene3D" id="3.40.50.150">
    <property type="entry name" value="Vaccinia Virus protein VP39"/>
    <property type="match status" value="1"/>
</dbReference>
<dbReference type="Gene3D" id="3.40.1630.10">
    <property type="entry name" value="YhiQ-like domain"/>
    <property type="match status" value="1"/>
</dbReference>
<dbReference type="HAMAP" id="MF_01523">
    <property type="entry name" value="16SrRNA_methyltr_J"/>
    <property type="match status" value="1"/>
</dbReference>
<dbReference type="InterPro" id="IPR007536">
    <property type="entry name" value="16SrRNA_methylTrfase_J"/>
</dbReference>
<dbReference type="InterPro" id="IPR029063">
    <property type="entry name" value="SAM-dependent_MTases_sf"/>
</dbReference>
<dbReference type="NCBIfam" id="NF008012">
    <property type="entry name" value="PRK10742.1"/>
    <property type="match status" value="1"/>
</dbReference>
<dbReference type="PANTHER" id="PTHR36112">
    <property type="entry name" value="RIBOSOMAL RNA SMALL SUBUNIT METHYLTRANSFERASE J"/>
    <property type="match status" value="1"/>
</dbReference>
<dbReference type="PANTHER" id="PTHR36112:SF1">
    <property type="entry name" value="RIBOSOMAL RNA SMALL SUBUNIT METHYLTRANSFERASE J"/>
    <property type="match status" value="1"/>
</dbReference>
<dbReference type="Pfam" id="PF04445">
    <property type="entry name" value="SAM_MT"/>
    <property type="match status" value="1"/>
</dbReference>
<dbReference type="SUPFAM" id="SSF53335">
    <property type="entry name" value="S-adenosyl-L-methionine-dependent methyltransferases"/>
    <property type="match status" value="1"/>
</dbReference>
<gene>
    <name evidence="1" type="primary">rsmJ</name>
    <name type="synonym">yhiQ</name>
    <name type="ordered locus">ECED1_4166</name>
</gene>
<reference key="1">
    <citation type="journal article" date="2009" name="PLoS Genet.">
        <title>Organised genome dynamics in the Escherichia coli species results in highly diverse adaptive paths.</title>
        <authorList>
            <person name="Touchon M."/>
            <person name="Hoede C."/>
            <person name="Tenaillon O."/>
            <person name="Barbe V."/>
            <person name="Baeriswyl S."/>
            <person name="Bidet P."/>
            <person name="Bingen E."/>
            <person name="Bonacorsi S."/>
            <person name="Bouchier C."/>
            <person name="Bouvet O."/>
            <person name="Calteau A."/>
            <person name="Chiapello H."/>
            <person name="Clermont O."/>
            <person name="Cruveiller S."/>
            <person name="Danchin A."/>
            <person name="Diard M."/>
            <person name="Dossat C."/>
            <person name="Karoui M.E."/>
            <person name="Frapy E."/>
            <person name="Garry L."/>
            <person name="Ghigo J.M."/>
            <person name="Gilles A.M."/>
            <person name="Johnson J."/>
            <person name="Le Bouguenec C."/>
            <person name="Lescat M."/>
            <person name="Mangenot S."/>
            <person name="Martinez-Jehanne V."/>
            <person name="Matic I."/>
            <person name="Nassif X."/>
            <person name="Oztas S."/>
            <person name="Petit M.A."/>
            <person name="Pichon C."/>
            <person name="Rouy Z."/>
            <person name="Ruf C.S."/>
            <person name="Schneider D."/>
            <person name="Tourret J."/>
            <person name="Vacherie B."/>
            <person name="Vallenet D."/>
            <person name="Medigue C."/>
            <person name="Rocha E.P.C."/>
            <person name="Denamur E."/>
        </authorList>
    </citation>
    <scope>NUCLEOTIDE SEQUENCE [LARGE SCALE GENOMIC DNA]</scope>
    <source>
        <strain>ED1a</strain>
    </source>
</reference>
<accession>B7N1D6</accession>
<proteinExistence type="inferred from homology"/>
<sequence length="250" mass="26905">MKICLIDETGAGDGALSVLAARWGLEHDEDNLMALVLTPEHLELRKRDEPKLGGIFVDFVGGAMAHRRKFGGGRGEAVAKAVGIKGDYLPDVVDATAGLGRDAFVLASVGCRVRMLERNPVVAALLDDGLARGYADAEIGGWLQERLQLIHASSLTALSDITPRPQVVYLDPMFPHKQKSALVKKEMRVFQSLVGPDLDADGLLEPARLLATKRVVVKRPDYAPPLANVATPNAVVTKGHRFDIYAGTPV</sequence>
<evidence type="ECO:0000255" key="1">
    <source>
        <dbReference type="HAMAP-Rule" id="MF_01523"/>
    </source>
</evidence>
<keyword id="KW-0963">Cytoplasm</keyword>
<keyword id="KW-0489">Methyltransferase</keyword>
<keyword id="KW-0698">rRNA processing</keyword>
<keyword id="KW-0949">S-adenosyl-L-methionine</keyword>
<keyword id="KW-0808">Transferase</keyword>
<comment type="function">
    <text evidence="1">Specifically methylates the guanosine in position 1516 of 16S rRNA.</text>
</comment>
<comment type="catalytic activity">
    <reaction evidence="1">
        <text>guanosine(1516) in 16S rRNA + S-adenosyl-L-methionine = N(2)-methylguanosine(1516) in 16S rRNA + S-adenosyl-L-homocysteine + H(+)</text>
        <dbReference type="Rhea" id="RHEA:43220"/>
        <dbReference type="Rhea" id="RHEA-COMP:10412"/>
        <dbReference type="Rhea" id="RHEA-COMP:10413"/>
        <dbReference type="ChEBI" id="CHEBI:15378"/>
        <dbReference type="ChEBI" id="CHEBI:57856"/>
        <dbReference type="ChEBI" id="CHEBI:59789"/>
        <dbReference type="ChEBI" id="CHEBI:74269"/>
        <dbReference type="ChEBI" id="CHEBI:74481"/>
        <dbReference type="EC" id="2.1.1.242"/>
    </reaction>
</comment>
<comment type="subcellular location">
    <subcellularLocation>
        <location evidence="1">Cytoplasm</location>
    </subcellularLocation>
</comment>
<comment type="similarity">
    <text evidence="1">Belongs to the methyltransferase superfamily. RsmJ family.</text>
</comment>
<protein>
    <recommendedName>
        <fullName evidence="1">Ribosomal RNA small subunit methyltransferase J</fullName>
        <ecNumber evidence="1">2.1.1.242</ecNumber>
    </recommendedName>
    <alternativeName>
        <fullName evidence="1">16S rRNA m2G1516 methyltransferase</fullName>
    </alternativeName>
    <alternativeName>
        <fullName evidence="1">rRNA (guanine-N(2)-)-methyltransferase</fullName>
    </alternativeName>
</protein>
<organism>
    <name type="scientific">Escherichia coli O81 (strain ED1a)</name>
    <dbReference type="NCBI Taxonomy" id="585397"/>
    <lineage>
        <taxon>Bacteria</taxon>
        <taxon>Pseudomonadati</taxon>
        <taxon>Pseudomonadota</taxon>
        <taxon>Gammaproteobacteria</taxon>
        <taxon>Enterobacterales</taxon>
        <taxon>Enterobacteriaceae</taxon>
        <taxon>Escherichia</taxon>
    </lineage>
</organism>